<evidence type="ECO:0000255" key="1">
    <source>
        <dbReference type="HAMAP-Rule" id="MF_00033"/>
    </source>
</evidence>
<keyword id="KW-0131">Cell cycle</keyword>
<keyword id="KW-0132">Cell division</keyword>
<keyword id="KW-1003">Cell membrane</keyword>
<keyword id="KW-0133">Cell shape</keyword>
<keyword id="KW-0961">Cell wall biogenesis/degradation</keyword>
<keyword id="KW-0328">Glycosyltransferase</keyword>
<keyword id="KW-0472">Membrane</keyword>
<keyword id="KW-0573">Peptidoglycan synthesis</keyword>
<keyword id="KW-1185">Reference proteome</keyword>
<keyword id="KW-0808">Transferase</keyword>
<reference key="1">
    <citation type="submission" date="2008-04" db="EMBL/GenBank/DDBJ databases">
        <title>Complete sequence of chromosome of Exiguobacterium sibiricum 255-15.</title>
        <authorList>
            <consortium name="US DOE Joint Genome Institute"/>
            <person name="Copeland A."/>
            <person name="Lucas S."/>
            <person name="Lapidus A."/>
            <person name="Glavina del Rio T."/>
            <person name="Dalin E."/>
            <person name="Tice H."/>
            <person name="Bruce D."/>
            <person name="Goodwin L."/>
            <person name="Pitluck S."/>
            <person name="Kiss H."/>
            <person name="Chertkov O."/>
            <person name="Monk C."/>
            <person name="Brettin T."/>
            <person name="Detter J.C."/>
            <person name="Han C."/>
            <person name="Kuske C.R."/>
            <person name="Schmutz J."/>
            <person name="Larimer F."/>
            <person name="Land M."/>
            <person name="Hauser L."/>
            <person name="Kyrpides N."/>
            <person name="Mikhailova N."/>
            <person name="Vishnivetskaya T."/>
            <person name="Rodrigues D.F."/>
            <person name="Gilichinsky D."/>
            <person name="Tiedje J."/>
            <person name="Richardson P."/>
        </authorList>
    </citation>
    <scope>NUCLEOTIDE SEQUENCE [LARGE SCALE GENOMIC DNA]</scope>
    <source>
        <strain>DSM 17290 / CCUG 55495 / CIP 109462 / JCM 13490 / 255-15</strain>
    </source>
</reference>
<name>MURG_EXIS2</name>
<gene>
    <name evidence="1" type="primary">murG</name>
    <name type="ordered locus">Exig_1961</name>
</gene>
<protein>
    <recommendedName>
        <fullName evidence="1">UDP-N-acetylglucosamine--N-acetylmuramyl-(pentapeptide) pyrophosphoryl-undecaprenol N-acetylglucosamine transferase</fullName>
        <ecNumber evidence="1">2.4.1.227</ecNumber>
    </recommendedName>
    <alternativeName>
        <fullName evidence="1">Undecaprenyl-PP-MurNAc-pentapeptide-UDPGlcNAc GlcNAc transferase</fullName>
    </alternativeName>
</protein>
<sequence>MRIVVSGGGTGGHIYPALAMIREIERRTPCEVLYIGTENGLEADIVRRAGIPFESIEISGIRRSLSFENVKTGFRFLKSVVRVRKLLRDFQPDIVVGTGGFVCGPVLYTAAKMGYKTLVHEQNSLPGITNKFLARYVDRVALSFKGSGHHFGKNKGKTILIGNPRASEVAMLQIDPVEEKRKYGFEQDRPLIVVYGGSRGAPAINKAVVDMIPKLTETDWSLLFVTGQVHYEDIQAQLGTLPDRIQLRPFIYDLPLILKASQLVISRSGASTLAELTTLGLPSILIPSPYVTENHQEVNASSLVETGASLLIRESELTGDRLFDACTKAIADQADMSKASLALGMPNAASDLVDELLRLIQRKN</sequence>
<feature type="chain" id="PRO_1000090433" description="UDP-N-acetylglucosamine--N-acetylmuramyl-(pentapeptide) pyrophosphoryl-undecaprenol N-acetylglucosamine transferase">
    <location>
        <begin position="1"/>
        <end position="364"/>
    </location>
</feature>
<feature type="binding site" evidence="1">
    <location>
        <begin position="10"/>
        <end position="12"/>
    </location>
    <ligand>
        <name>UDP-N-acetyl-alpha-D-glucosamine</name>
        <dbReference type="ChEBI" id="CHEBI:57705"/>
    </ligand>
</feature>
<feature type="binding site" evidence="1">
    <location>
        <position position="123"/>
    </location>
    <ligand>
        <name>UDP-N-acetyl-alpha-D-glucosamine</name>
        <dbReference type="ChEBI" id="CHEBI:57705"/>
    </ligand>
</feature>
<feature type="binding site" evidence="1">
    <location>
        <position position="198"/>
    </location>
    <ligand>
        <name>UDP-N-acetyl-alpha-D-glucosamine</name>
        <dbReference type="ChEBI" id="CHEBI:57705"/>
    </ligand>
</feature>
<feature type="binding site" evidence="1">
    <location>
        <position position="251"/>
    </location>
    <ligand>
        <name>UDP-N-acetyl-alpha-D-glucosamine</name>
        <dbReference type="ChEBI" id="CHEBI:57705"/>
    </ligand>
</feature>
<feature type="binding site" evidence="1">
    <location>
        <position position="296"/>
    </location>
    <ligand>
        <name>UDP-N-acetyl-alpha-D-glucosamine</name>
        <dbReference type="ChEBI" id="CHEBI:57705"/>
    </ligand>
</feature>
<organism>
    <name type="scientific">Exiguobacterium sibiricum (strain DSM 17290 / CCUG 55495 / CIP 109462 / JCM 13490 / 255-15)</name>
    <dbReference type="NCBI Taxonomy" id="262543"/>
    <lineage>
        <taxon>Bacteria</taxon>
        <taxon>Bacillati</taxon>
        <taxon>Bacillota</taxon>
        <taxon>Bacilli</taxon>
        <taxon>Bacillales</taxon>
        <taxon>Bacillales Family XII. Incertae Sedis</taxon>
        <taxon>Exiguobacterium</taxon>
    </lineage>
</organism>
<comment type="function">
    <text evidence="1">Cell wall formation. Catalyzes the transfer of a GlcNAc subunit on undecaprenyl-pyrophosphoryl-MurNAc-pentapeptide (lipid intermediate I) to form undecaprenyl-pyrophosphoryl-MurNAc-(pentapeptide)GlcNAc (lipid intermediate II).</text>
</comment>
<comment type="catalytic activity">
    <reaction evidence="1">
        <text>di-trans,octa-cis-undecaprenyl diphospho-N-acetyl-alpha-D-muramoyl-L-alanyl-D-glutamyl-meso-2,6-diaminopimeloyl-D-alanyl-D-alanine + UDP-N-acetyl-alpha-D-glucosamine = di-trans,octa-cis-undecaprenyl diphospho-[N-acetyl-alpha-D-glucosaminyl-(1-&gt;4)]-N-acetyl-alpha-D-muramoyl-L-alanyl-D-glutamyl-meso-2,6-diaminopimeloyl-D-alanyl-D-alanine + UDP + H(+)</text>
        <dbReference type="Rhea" id="RHEA:31227"/>
        <dbReference type="ChEBI" id="CHEBI:15378"/>
        <dbReference type="ChEBI" id="CHEBI:57705"/>
        <dbReference type="ChEBI" id="CHEBI:58223"/>
        <dbReference type="ChEBI" id="CHEBI:61387"/>
        <dbReference type="ChEBI" id="CHEBI:61388"/>
        <dbReference type="EC" id="2.4.1.227"/>
    </reaction>
</comment>
<comment type="pathway">
    <text evidence="1">Cell wall biogenesis; peptidoglycan biosynthesis.</text>
</comment>
<comment type="subcellular location">
    <subcellularLocation>
        <location evidence="1">Cell membrane</location>
        <topology evidence="1">Peripheral membrane protein</topology>
        <orientation evidence="1">Cytoplasmic side</orientation>
    </subcellularLocation>
</comment>
<comment type="similarity">
    <text evidence="1">Belongs to the glycosyltransferase 28 family. MurG subfamily.</text>
</comment>
<proteinExistence type="inferred from homology"/>
<dbReference type="EC" id="2.4.1.227" evidence="1"/>
<dbReference type="EMBL" id="CP001022">
    <property type="protein sequence ID" value="ACB61413.1"/>
    <property type="molecule type" value="Genomic_DNA"/>
</dbReference>
<dbReference type="RefSeq" id="WP_012370831.1">
    <property type="nucleotide sequence ID" value="NC_010556.1"/>
</dbReference>
<dbReference type="SMR" id="B1YIT7"/>
<dbReference type="STRING" id="262543.Exig_1961"/>
<dbReference type="CAZy" id="GT28">
    <property type="family name" value="Glycosyltransferase Family 28"/>
</dbReference>
<dbReference type="KEGG" id="esi:Exig_1961"/>
<dbReference type="eggNOG" id="COG0707">
    <property type="taxonomic scope" value="Bacteria"/>
</dbReference>
<dbReference type="HOGENOM" id="CLU_037404_0_1_9"/>
<dbReference type="OrthoDB" id="9808936at2"/>
<dbReference type="UniPathway" id="UPA00219"/>
<dbReference type="Proteomes" id="UP000001681">
    <property type="component" value="Chromosome"/>
</dbReference>
<dbReference type="GO" id="GO:0005886">
    <property type="term" value="C:plasma membrane"/>
    <property type="evidence" value="ECO:0007669"/>
    <property type="project" value="UniProtKB-SubCell"/>
</dbReference>
<dbReference type="GO" id="GO:0051991">
    <property type="term" value="F:UDP-N-acetyl-D-glucosamine:N-acetylmuramoyl-L-alanyl-D-glutamyl-meso-2,6-diaminopimelyl-D-alanyl-D-alanine-diphosphoundecaprenol 4-beta-N-acetylglucosaminlytransferase activity"/>
    <property type="evidence" value="ECO:0007669"/>
    <property type="project" value="RHEA"/>
</dbReference>
<dbReference type="GO" id="GO:0050511">
    <property type="term" value="F:undecaprenyldiphospho-muramoylpentapeptide beta-N-acetylglucosaminyltransferase activity"/>
    <property type="evidence" value="ECO:0007669"/>
    <property type="project" value="UniProtKB-UniRule"/>
</dbReference>
<dbReference type="GO" id="GO:0005975">
    <property type="term" value="P:carbohydrate metabolic process"/>
    <property type="evidence" value="ECO:0007669"/>
    <property type="project" value="InterPro"/>
</dbReference>
<dbReference type="GO" id="GO:0051301">
    <property type="term" value="P:cell division"/>
    <property type="evidence" value="ECO:0007669"/>
    <property type="project" value="UniProtKB-KW"/>
</dbReference>
<dbReference type="GO" id="GO:0071555">
    <property type="term" value="P:cell wall organization"/>
    <property type="evidence" value="ECO:0007669"/>
    <property type="project" value="UniProtKB-KW"/>
</dbReference>
<dbReference type="GO" id="GO:0030259">
    <property type="term" value="P:lipid glycosylation"/>
    <property type="evidence" value="ECO:0007669"/>
    <property type="project" value="UniProtKB-UniRule"/>
</dbReference>
<dbReference type="GO" id="GO:0009252">
    <property type="term" value="P:peptidoglycan biosynthetic process"/>
    <property type="evidence" value="ECO:0007669"/>
    <property type="project" value="UniProtKB-UniRule"/>
</dbReference>
<dbReference type="GO" id="GO:0008360">
    <property type="term" value="P:regulation of cell shape"/>
    <property type="evidence" value="ECO:0007669"/>
    <property type="project" value="UniProtKB-KW"/>
</dbReference>
<dbReference type="CDD" id="cd03785">
    <property type="entry name" value="GT28_MurG"/>
    <property type="match status" value="1"/>
</dbReference>
<dbReference type="Gene3D" id="3.40.50.2000">
    <property type="entry name" value="Glycogen Phosphorylase B"/>
    <property type="match status" value="2"/>
</dbReference>
<dbReference type="HAMAP" id="MF_00033">
    <property type="entry name" value="MurG"/>
    <property type="match status" value="1"/>
</dbReference>
<dbReference type="InterPro" id="IPR006009">
    <property type="entry name" value="GlcNAc_MurG"/>
</dbReference>
<dbReference type="InterPro" id="IPR007235">
    <property type="entry name" value="Glyco_trans_28_C"/>
</dbReference>
<dbReference type="InterPro" id="IPR004276">
    <property type="entry name" value="GlycoTrans_28_N"/>
</dbReference>
<dbReference type="NCBIfam" id="TIGR01133">
    <property type="entry name" value="murG"/>
    <property type="match status" value="1"/>
</dbReference>
<dbReference type="PANTHER" id="PTHR21015:SF22">
    <property type="entry name" value="GLYCOSYLTRANSFERASE"/>
    <property type="match status" value="1"/>
</dbReference>
<dbReference type="PANTHER" id="PTHR21015">
    <property type="entry name" value="UDP-N-ACETYLGLUCOSAMINE--N-ACETYLMURAMYL-(PENTAPEPTIDE) PYROPHOSPHORYL-UNDECAPRENOL N-ACETYLGLUCOSAMINE TRANSFERASE 1"/>
    <property type="match status" value="1"/>
</dbReference>
<dbReference type="Pfam" id="PF04101">
    <property type="entry name" value="Glyco_tran_28_C"/>
    <property type="match status" value="1"/>
</dbReference>
<dbReference type="Pfam" id="PF03033">
    <property type="entry name" value="Glyco_transf_28"/>
    <property type="match status" value="1"/>
</dbReference>
<dbReference type="SUPFAM" id="SSF53756">
    <property type="entry name" value="UDP-Glycosyltransferase/glycogen phosphorylase"/>
    <property type="match status" value="1"/>
</dbReference>
<accession>B1YIT7</accession>